<keyword id="KW-0150">Chloroplast</keyword>
<keyword id="KW-0472">Membrane</keyword>
<keyword id="KW-0934">Plastid</keyword>
<keyword id="KW-1185">Reference proteome</keyword>
<keyword id="KW-0809">Transit peptide</keyword>
<keyword id="KW-0812">Transmembrane</keyword>
<keyword id="KW-1133">Transmembrane helix</keyword>
<keyword id="KW-0813">Transport</keyword>
<evidence type="ECO:0000255" key="1"/>
<evidence type="ECO:0000256" key="2">
    <source>
        <dbReference type="SAM" id="MobiDB-lite"/>
    </source>
</evidence>
<evidence type="ECO:0000269" key="3">
    <source>
    </source>
</evidence>
<evidence type="ECO:0000303" key="4">
    <source>
    </source>
</evidence>
<evidence type="ECO:0000305" key="5"/>
<evidence type="ECO:0000312" key="6">
    <source>
        <dbReference type="Araport" id="AT2G38330"/>
    </source>
</evidence>
<evidence type="ECO:0000312" key="7">
    <source>
        <dbReference type="EMBL" id="AAC28771.1"/>
    </source>
</evidence>
<protein>
    <recommendedName>
        <fullName evidence="4">Protein DETOXIFICATION 44, chloroplastic</fullName>
        <shortName evidence="4">AtDTX44</shortName>
    </recommendedName>
    <alternativeName>
        <fullName evidence="5">Multidrug and toxic compound extrusion protein 44</fullName>
        <shortName evidence="5">MATE protein 44</shortName>
    </alternativeName>
</protein>
<proteinExistence type="evidence at transcript level"/>
<dbReference type="EMBL" id="AC004683">
    <property type="protein sequence ID" value="AAC28771.1"/>
    <property type="status" value="ALT_SEQ"/>
    <property type="molecule type" value="Genomic_DNA"/>
</dbReference>
<dbReference type="EMBL" id="CP002685">
    <property type="protein sequence ID" value="AEC09524.1"/>
    <property type="molecule type" value="Genomic_DNA"/>
</dbReference>
<dbReference type="EMBL" id="BT004001">
    <property type="protein sequence ID" value="AAO42040.1"/>
    <property type="molecule type" value="mRNA"/>
</dbReference>
<dbReference type="EMBL" id="BT005521">
    <property type="protein sequence ID" value="AAO63941.1"/>
    <property type="molecule type" value="mRNA"/>
</dbReference>
<dbReference type="PIR" id="T02512">
    <property type="entry name" value="T02512"/>
</dbReference>
<dbReference type="RefSeq" id="NP_181367.2">
    <property type="nucleotide sequence ID" value="NM_129389.3"/>
</dbReference>
<dbReference type="SMR" id="Q84K71"/>
<dbReference type="BioGRID" id="3755">
    <property type="interactions" value="35"/>
</dbReference>
<dbReference type="FunCoup" id="Q84K71">
    <property type="interactions" value="709"/>
</dbReference>
<dbReference type="IntAct" id="Q84K71">
    <property type="interactions" value="35"/>
</dbReference>
<dbReference type="STRING" id="3702.Q84K71"/>
<dbReference type="TCDB" id="2.A.66.1.54">
    <property type="family name" value="the multidrug/oligosaccharidyl-lipid/polysaccharide (mop) flippase superfamily"/>
</dbReference>
<dbReference type="PaxDb" id="3702-AT2G38330.1"/>
<dbReference type="ProteomicsDB" id="221883"/>
<dbReference type="EnsemblPlants" id="AT2G38330.1">
    <property type="protein sequence ID" value="AT2G38330.1"/>
    <property type="gene ID" value="AT2G38330"/>
</dbReference>
<dbReference type="GeneID" id="818413"/>
<dbReference type="Gramene" id="AT2G38330.1">
    <property type="protein sequence ID" value="AT2G38330.1"/>
    <property type="gene ID" value="AT2G38330"/>
</dbReference>
<dbReference type="KEGG" id="ath:AT2G38330"/>
<dbReference type="Araport" id="AT2G38330"/>
<dbReference type="TAIR" id="AT2G38330"/>
<dbReference type="eggNOG" id="KOG1347">
    <property type="taxonomic scope" value="Eukaryota"/>
</dbReference>
<dbReference type="HOGENOM" id="CLU_012893_16_2_1"/>
<dbReference type="InParanoid" id="Q84K71"/>
<dbReference type="OMA" id="QPFVGYN"/>
<dbReference type="PhylomeDB" id="Q84K71"/>
<dbReference type="PRO" id="PR:Q84K71"/>
<dbReference type="Proteomes" id="UP000006548">
    <property type="component" value="Chromosome 2"/>
</dbReference>
<dbReference type="ExpressionAtlas" id="Q84K71">
    <property type="expression patterns" value="baseline and differential"/>
</dbReference>
<dbReference type="GO" id="GO:0031969">
    <property type="term" value="C:chloroplast membrane"/>
    <property type="evidence" value="ECO:0007669"/>
    <property type="project" value="UniProtKB-SubCell"/>
</dbReference>
<dbReference type="GO" id="GO:0015297">
    <property type="term" value="F:antiporter activity"/>
    <property type="evidence" value="ECO:0007669"/>
    <property type="project" value="InterPro"/>
</dbReference>
<dbReference type="GO" id="GO:0042910">
    <property type="term" value="F:xenobiotic transmembrane transporter activity"/>
    <property type="evidence" value="ECO:0007669"/>
    <property type="project" value="InterPro"/>
</dbReference>
<dbReference type="CDD" id="cd13136">
    <property type="entry name" value="MATE_DinF_like"/>
    <property type="match status" value="1"/>
</dbReference>
<dbReference type="InterPro" id="IPR044644">
    <property type="entry name" value="DinF-like"/>
</dbReference>
<dbReference type="InterPro" id="IPR002528">
    <property type="entry name" value="MATE_fam"/>
</dbReference>
<dbReference type="NCBIfam" id="TIGR00797">
    <property type="entry name" value="matE"/>
    <property type="match status" value="1"/>
</dbReference>
<dbReference type="PANTHER" id="PTHR42893:SF46">
    <property type="entry name" value="PROTEIN DETOXIFICATION 44, CHLOROPLASTIC"/>
    <property type="match status" value="1"/>
</dbReference>
<dbReference type="PANTHER" id="PTHR42893">
    <property type="entry name" value="PROTEIN DETOXIFICATION 44, CHLOROPLASTIC-RELATED"/>
    <property type="match status" value="1"/>
</dbReference>
<dbReference type="Pfam" id="PF01554">
    <property type="entry name" value="MatE"/>
    <property type="match status" value="2"/>
</dbReference>
<gene>
    <name evidence="4" type="primary">DTX44</name>
    <name evidence="6" type="ordered locus">At2g38330</name>
    <name evidence="7" type="ORF">T19C21.18</name>
</gene>
<name>DTX44_ARATH</name>
<reference key="1">
    <citation type="journal article" date="1999" name="Nature">
        <title>Sequence and analysis of chromosome 2 of the plant Arabidopsis thaliana.</title>
        <authorList>
            <person name="Lin X."/>
            <person name="Kaul S."/>
            <person name="Rounsley S.D."/>
            <person name="Shea T.P."/>
            <person name="Benito M.-I."/>
            <person name="Town C.D."/>
            <person name="Fujii C.Y."/>
            <person name="Mason T.M."/>
            <person name="Bowman C.L."/>
            <person name="Barnstead M.E."/>
            <person name="Feldblyum T.V."/>
            <person name="Buell C.R."/>
            <person name="Ketchum K.A."/>
            <person name="Lee J.J."/>
            <person name="Ronning C.M."/>
            <person name="Koo H.L."/>
            <person name="Moffat K.S."/>
            <person name="Cronin L.A."/>
            <person name="Shen M."/>
            <person name="Pai G."/>
            <person name="Van Aken S."/>
            <person name="Umayam L."/>
            <person name="Tallon L.J."/>
            <person name="Gill J.E."/>
            <person name="Adams M.D."/>
            <person name="Carrera A.J."/>
            <person name="Creasy T.H."/>
            <person name="Goodman H.M."/>
            <person name="Somerville C.R."/>
            <person name="Copenhaver G.P."/>
            <person name="Preuss D."/>
            <person name="Nierman W.C."/>
            <person name="White O."/>
            <person name="Eisen J.A."/>
            <person name="Salzberg S.L."/>
            <person name="Fraser C.M."/>
            <person name="Venter J.C."/>
        </authorList>
    </citation>
    <scope>NUCLEOTIDE SEQUENCE [LARGE SCALE GENOMIC DNA]</scope>
    <source>
        <strain>cv. Columbia</strain>
    </source>
</reference>
<reference key="2">
    <citation type="journal article" date="2017" name="Plant J.">
        <title>Araport11: a complete reannotation of the Arabidopsis thaliana reference genome.</title>
        <authorList>
            <person name="Cheng C.Y."/>
            <person name="Krishnakumar V."/>
            <person name="Chan A.P."/>
            <person name="Thibaud-Nissen F."/>
            <person name="Schobel S."/>
            <person name="Town C.D."/>
        </authorList>
    </citation>
    <scope>GENOME REANNOTATION</scope>
    <source>
        <strain>cv. Columbia</strain>
    </source>
</reference>
<reference key="3">
    <citation type="journal article" date="2003" name="Science">
        <title>Empirical analysis of transcriptional activity in the Arabidopsis genome.</title>
        <authorList>
            <person name="Yamada K."/>
            <person name="Lim J."/>
            <person name="Dale J.M."/>
            <person name="Chen H."/>
            <person name="Shinn P."/>
            <person name="Palm C.J."/>
            <person name="Southwick A.M."/>
            <person name="Wu H.C."/>
            <person name="Kim C.J."/>
            <person name="Nguyen M."/>
            <person name="Pham P.K."/>
            <person name="Cheuk R.F."/>
            <person name="Karlin-Newmann G."/>
            <person name="Liu S.X."/>
            <person name="Lam B."/>
            <person name="Sakano H."/>
            <person name="Wu T."/>
            <person name="Yu G."/>
            <person name="Miranda M."/>
            <person name="Quach H.L."/>
            <person name="Tripp M."/>
            <person name="Chang C.H."/>
            <person name="Lee J.M."/>
            <person name="Toriumi M.J."/>
            <person name="Chan M.M."/>
            <person name="Tang C.C."/>
            <person name="Onodera C.S."/>
            <person name="Deng J.M."/>
            <person name="Akiyama K."/>
            <person name="Ansari Y."/>
            <person name="Arakawa T."/>
            <person name="Banh J."/>
            <person name="Banno F."/>
            <person name="Bowser L."/>
            <person name="Brooks S.Y."/>
            <person name="Carninci P."/>
            <person name="Chao Q."/>
            <person name="Choy N."/>
            <person name="Enju A."/>
            <person name="Goldsmith A.D."/>
            <person name="Gurjal M."/>
            <person name="Hansen N.F."/>
            <person name="Hayashizaki Y."/>
            <person name="Johnson-Hopson C."/>
            <person name="Hsuan V.W."/>
            <person name="Iida K."/>
            <person name="Karnes M."/>
            <person name="Khan S."/>
            <person name="Koesema E."/>
            <person name="Ishida J."/>
            <person name="Jiang P.X."/>
            <person name="Jones T."/>
            <person name="Kawai J."/>
            <person name="Kamiya A."/>
            <person name="Meyers C."/>
            <person name="Nakajima M."/>
            <person name="Narusaka M."/>
            <person name="Seki M."/>
            <person name="Sakurai T."/>
            <person name="Satou M."/>
            <person name="Tamse R."/>
            <person name="Vaysberg M."/>
            <person name="Wallender E.K."/>
            <person name="Wong C."/>
            <person name="Yamamura Y."/>
            <person name="Yuan S."/>
            <person name="Shinozaki K."/>
            <person name="Davis R.W."/>
            <person name="Theologis A."/>
            <person name="Ecker J.R."/>
        </authorList>
    </citation>
    <scope>NUCLEOTIDE SEQUENCE [LARGE SCALE MRNA]</scope>
    <source>
        <strain>cv. Columbia</strain>
    </source>
</reference>
<reference key="4">
    <citation type="journal article" date="2002" name="J. Biol. Chem.">
        <title>Functional cloning and characterization of a plant efflux carrier for multidrug and heavy metal detoxification.</title>
        <authorList>
            <person name="Li L."/>
            <person name="He Z."/>
            <person name="Pandey G.K."/>
            <person name="Tsuchiya T."/>
            <person name="Luan S."/>
        </authorList>
    </citation>
    <scope>GENE FAMILY</scope>
    <scope>NOMENCLATURE</scope>
</reference>
<reference key="5">
    <citation type="journal article" date="2003" name="Eur. J. Biochem.">
        <title>The multidrug/oligosaccharidyl-lipid/polysaccharide (MOP) exporter superfamily.</title>
        <authorList>
            <person name="Hvorup R.N."/>
            <person name="Winnen B."/>
            <person name="Chang A.B."/>
            <person name="Jiang Y."/>
            <person name="Zhou X.F."/>
            <person name="Saier M.H. Jr."/>
        </authorList>
    </citation>
    <scope>GENE FAMILY</scope>
</reference>
<reference key="6">
    <citation type="journal article" date="2009" name="Plant J.">
        <title>Aluminum-activated citrate and malate transporters from the MATE and ALMT families function independently to confer Arabidopsis aluminum tolerance.</title>
        <authorList>
            <person name="Liu J."/>
            <person name="Magalhaes J.V."/>
            <person name="Shaff J."/>
            <person name="Kochian L.V."/>
        </authorList>
    </citation>
    <scope>INDUCTION BY ALUMINUM</scope>
    <scope>TISSUE SPECIFICITY</scope>
    <scope>DISRUPTION PHENOTYPE</scope>
</reference>
<comment type="subcellular location">
    <subcellularLocation>
        <location evidence="5">Plastid</location>
        <location evidence="5">Chloroplast membrane</location>
        <topology evidence="5">Multi-pass membrane protein</topology>
    </subcellularLocation>
</comment>
<comment type="tissue specificity">
    <text evidence="3">Expressed in shoots.</text>
</comment>
<comment type="induction">
    <text evidence="3">Not induced by aluminum.</text>
</comment>
<comment type="disruption phenotype">
    <text evidence="3">No reduction in aluminum tolerance.</text>
</comment>
<comment type="similarity">
    <text evidence="5">Belongs to the multi antimicrobial extrusion (MATE) (TC 2.A.66.1) family.</text>
</comment>
<comment type="sequence caution" evidence="5">
    <conflict type="erroneous gene model prediction">
        <sequence resource="EMBL-CDS" id="AAC28771"/>
    </conflict>
</comment>
<sequence>MAAVATSFCFSPHRSPSRFGNPNSSIRRTIVCKSSPRDESPAVSTSSQRPEKQQNPLTSQNKPDHDHKPDPGIGKIGMEIMSIALPAALALAADPITSLVDTAFVGHIGSAELAAVGVSVSVFNLVSKLFNVPLLNVTTSFVAEEQAIAAKDDNDSIETSKKVLPSVSTSLVLAAGVGIAEAIALSLGSDFLMDVMAIPFDSPMRIPAEQFLRLRAYGAPPIVVALAAQGAFRGFKDTTTPLYAVVAGNVLNAVLDPILIFVLGFGISGAAAATVISEYLIAFILLWKLNENVVLLSPQIKVGRANQYLKSGGLLIGRTVALLVPFTLATSLAAQNGPTQMAGHQIVLEIWLAVSLLTDALAIAAQSLLATTYSQGEYKQAREVLFGVLQVGLATGTGLAAVLFITFEPFSSLFTTDSEVLKIALSGTLFVAGSQPVNALAFVLDGLYYGVSDFGFAAYSMVIVGFISSLFMLVAAPTFGLAGIWTGLFLFMALRLVAGAWRLGTRTGPWKMLWSAPEKPE</sequence>
<accession>Q84K71</accession>
<accession>O80918</accession>
<organism>
    <name type="scientific">Arabidopsis thaliana</name>
    <name type="common">Mouse-ear cress</name>
    <dbReference type="NCBI Taxonomy" id="3702"/>
    <lineage>
        <taxon>Eukaryota</taxon>
        <taxon>Viridiplantae</taxon>
        <taxon>Streptophyta</taxon>
        <taxon>Embryophyta</taxon>
        <taxon>Tracheophyta</taxon>
        <taxon>Spermatophyta</taxon>
        <taxon>Magnoliopsida</taxon>
        <taxon>eudicotyledons</taxon>
        <taxon>Gunneridae</taxon>
        <taxon>Pentapetalae</taxon>
        <taxon>rosids</taxon>
        <taxon>malvids</taxon>
        <taxon>Brassicales</taxon>
        <taxon>Brassicaceae</taxon>
        <taxon>Camelineae</taxon>
        <taxon>Arabidopsis</taxon>
    </lineage>
</organism>
<feature type="transit peptide" description="Chloroplast" evidence="1">
    <location>
        <begin position="1"/>
        <end position="31"/>
    </location>
</feature>
<feature type="chain" id="PRO_0000405273" description="Protein DETOXIFICATION 44, chloroplastic">
    <location>
        <begin position="32"/>
        <end position="521"/>
    </location>
</feature>
<feature type="transmembrane region" description="Helical" evidence="1">
    <location>
        <begin position="80"/>
        <end position="100"/>
    </location>
</feature>
<feature type="transmembrane region" description="Helical" evidence="1">
    <location>
        <begin position="103"/>
        <end position="123"/>
    </location>
</feature>
<feature type="transmembrane region" description="Helical" evidence="1">
    <location>
        <begin position="167"/>
        <end position="187"/>
    </location>
</feature>
<feature type="transmembrane region" description="Helical" evidence="1">
    <location>
        <begin position="213"/>
        <end position="235"/>
    </location>
</feature>
<feature type="transmembrane region" description="Helical" evidence="1">
    <location>
        <begin position="242"/>
        <end position="262"/>
    </location>
</feature>
<feature type="transmembrane region" description="Helical" evidence="1">
    <location>
        <begin position="268"/>
        <end position="288"/>
    </location>
</feature>
<feature type="transmembrane region" description="Helical" evidence="1">
    <location>
        <begin position="314"/>
        <end position="334"/>
    </location>
</feature>
<feature type="transmembrane region" description="Helical" evidence="1">
    <location>
        <begin position="345"/>
        <end position="365"/>
    </location>
</feature>
<feature type="transmembrane region" description="Helical" evidence="1">
    <location>
        <begin position="385"/>
        <end position="405"/>
    </location>
</feature>
<feature type="transmembrane region" description="Helical" evidence="1">
    <location>
        <begin position="423"/>
        <end position="443"/>
    </location>
</feature>
<feature type="transmembrane region" description="Helical" evidence="1">
    <location>
        <begin position="454"/>
        <end position="474"/>
    </location>
</feature>
<feature type="transmembrane region" description="Helical" evidence="1">
    <location>
        <begin position="481"/>
        <end position="503"/>
    </location>
</feature>
<feature type="region of interest" description="Disordered" evidence="2">
    <location>
        <begin position="12"/>
        <end position="73"/>
    </location>
</feature>
<feature type="compositionally biased region" description="Polar residues" evidence="2">
    <location>
        <begin position="18"/>
        <end position="27"/>
    </location>
</feature>
<feature type="compositionally biased region" description="Polar residues" evidence="2">
    <location>
        <begin position="42"/>
        <end position="61"/>
    </location>
</feature>